<name>RBL_PLAOC</name>
<accession>P28441</accession>
<accession>Q09G38</accession>
<sequence>MSPQTETKASVGFKAGVKDYKLTYYTPDYETKDTDILAAFRVTPQPGVPPEEAGAAVAAESSTGTWTTVWTDGLTSLDRYKGRCYHIEPVAGEENQYIAYVAYPLDLFEEGSVTNMFTSIVGNVFGFKALRALRLEDLRIPPAYSKTFQGPPHGIQVERDKLNKYGRPLLGCTIKPKLGLSAKNYGRAVYECLRGGLDFTKDDENVNSQPFMRWRDRFLFCAEAIYKAQAETGEIKGHYLNATAGTCEEMIKRAVFARELGVPIVMHDYLTGGFTANTSLAHYCRDNGLLLHIHRAMHAVIDRQKNHGIHFRVLAKALRMSGGDHIHAGTVVGKLEGEREITLGFVDLLRDDFIEKDRSRGIYFTQDWVSLPGVLPVASGGIHVWHMPALTEIFGDDSVLQFGGGTLGHPWGNAPGAVANRVALEACVQARNEGRDLAREGNEIIREACKWSPELAAACEVWKEIKFEFEAMDTL</sequence>
<geneLocation type="chloroplast"/>
<evidence type="ECO:0000255" key="1">
    <source>
        <dbReference type="HAMAP-Rule" id="MF_01338"/>
    </source>
</evidence>
<evidence type="ECO:0000305" key="2"/>
<feature type="propeptide" id="PRO_0000262596" evidence="1">
    <location>
        <begin position="1"/>
        <end position="2"/>
    </location>
</feature>
<feature type="chain" id="PRO_0000062565" description="Ribulose bisphosphate carboxylase large chain">
    <location>
        <begin position="3"/>
        <end position="475"/>
    </location>
</feature>
<feature type="active site" description="Proton acceptor" evidence="1">
    <location>
        <position position="175"/>
    </location>
</feature>
<feature type="active site" description="Proton acceptor" evidence="1">
    <location>
        <position position="294"/>
    </location>
</feature>
<feature type="binding site" description="in homodimeric partner" evidence="1">
    <location>
        <position position="123"/>
    </location>
    <ligand>
        <name>substrate</name>
    </ligand>
</feature>
<feature type="binding site" evidence="1">
    <location>
        <position position="173"/>
    </location>
    <ligand>
        <name>substrate</name>
    </ligand>
</feature>
<feature type="binding site" evidence="1">
    <location>
        <position position="177"/>
    </location>
    <ligand>
        <name>substrate</name>
    </ligand>
</feature>
<feature type="binding site" description="via carbamate group" evidence="1">
    <location>
        <position position="201"/>
    </location>
    <ligand>
        <name>Mg(2+)</name>
        <dbReference type="ChEBI" id="CHEBI:18420"/>
    </ligand>
</feature>
<feature type="binding site" evidence="1">
    <location>
        <position position="203"/>
    </location>
    <ligand>
        <name>Mg(2+)</name>
        <dbReference type="ChEBI" id="CHEBI:18420"/>
    </ligand>
</feature>
<feature type="binding site" evidence="1">
    <location>
        <position position="204"/>
    </location>
    <ligand>
        <name>Mg(2+)</name>
        <dbReference type="ChEBI" id="CHEBI:18420"/>
    </ligand>
</feature>
<feature type="binding site" evidence="1">
    <location>
        <position position="295"/>
    </location>
    <ligand>
        <name>substrate</name>
    </ligand>
</feature>
<feature type="binding site" evidence="1">
    <location>
        <position position="327"/>
    </location>
    <ligand>
        <name>substrate</name>
    </ligand>
</feature>
<feature type="binding site" evidence="1">
    <location>
        <position position="379"/>
    </location>
    <ligand>
        <name>substrate</name>
    </ligand>
</feature>
<feature type="site" description="Transition state stabilizer" evidence="1">
    <location>
        <position position="334"/>
    </location>
</feature>
<feature type="modified residue" description="N-acetylproline" evidence="1">
    <location>
        <position position="3"/>
    </location>
</feature>
<feature type="modified residue" description="N6,N6,N6-trimethyllysine" evidence="1">
    <location>
        <position position="14"/>
    </location>
</feature>
<feature type="modified residue" description="N6-carboxylysine" evidence="1">
    <location>
        <position position="201"/>
    </location>
</feature>
<feature type="disulfide bond" description="Interchain; in linked form" evidence="1">
    <location>
        <position position="247"/>
    </location>
</feature>
<feature type="sequence conflict" description="In Ref. 1; AAA84567." evidence="2" ref="1">
    <original>DYE</original>
    <variation>EYK</variation>
    <location>
        <begin position="28"/>
        <end position="30"/>
    </location>
</feature>
<feature type="sequence conflict" description="In Ref. 1; AAA84567." evidence="2" ref="1">
    <original>PVA</original>
    <variation>TVT</variation>
    <location>
        <begin position="89"/>
        <end position="91"/>
    </location>
</feature>
<feature type="sequence conflict" description="In Ref. 1; AAA84567." evidence="2" ref="1">
    <original>YIA</original>
    <variation>FIV</variation>
    <location>
        <begin position="97"/>
        <end position="99"/>
    </location>
</feature>
<feature type="sequence conflict" description="In Ref. 1; AAA84567." evidence="2" ref="1">
    <original>N</original>
    <variation>D</variation>
    <location>
        <position position="123"/>
    </location>
</feature>
<feature type="sequence conflict" description="In Ref. 1; AAA84567." evidence="2" ref="1">
    <original>I</original>
    <variation>L</variation>
    <location>
        <position position="225"/>
    </location>
</feature>
<feature type="sequence conflict" description="In Ref. 1; AAA84567." evidence="2" ref="1">
    <original>SLAH</original>
    <variation>TLSY</variation>
    <location>
        <begin position="279"/>
        <end position="282"/>
    </location>
</feature>
<feature type="sequence conflict" description="In Ref. 1; AAA84567." evidence="2" ref="1">
    <original>AGT</original>
    <variation>SGI</variation>
    <location>
        <begin position="328"/>
        <end position="330"/>
    </location>
</feature>
<feature type="sequence conflict" description="In Ref. 1; AAA84567." evidence="2" ref="1">
    <original>E</original>
    <variation>D</variation>
    <location>
        <position position="340"/>
    </location>
</feature>
<feature type="sequence conflict" description="In Ref. 1; AAA84567." evidence="2" ref="1">
    <original>FIEK</original>
    <variation>LVEE</variation>
    <location>
        <begin position="353"/>
        <end position="356"/>
    </location>
</feature>
<feature type="sequence conflict" description="In Ref. 1; AAA84567." evidence="2" ref="1">
    <original>C</original>
    <variation>S</variation>
    <location>
        <position position="449"/>
    </location>
</feature>
<organism>
    <name type="scientific">Platanus occidentalis</name>
    <name type="common">Sycamore</name>
    <name type="synonym">American plane tree</name>
    <dbReference type="NCBI Taxonomy" id="4403"/>
    <lineage>
        <taxon>Eukaryota</taxon>
        <taxon>Viridiplantae</taxon>
        <taxon>Streptophyta</taxon>
        <taxon>Embryophyta</taxon>
        <taxon>Tracheophyta</taxon>
        <taxon>Spermatophyta</taxon>
        <taxon>Magnoliopsida</taxon>
        <taxon>Proteales</taxon>
        <taxon>Platanaceae</taxon>
        <taxon>Platanus</taxon>
    </lineage>
</organism>
<proteinExistence type="inferred from homology"/>
<reference key="1">
    <citation type="journal article" date="2006" name="BMC Plant Biol.">
        <title>Rapid and accurate pyrosequencing of angiosperm plastid genomes.</title>
        <authorList>
            <person name="Moore M.J."/>
            <person name="Dhingra A."/>
            <person name="Soltis P.S."/>
            <person name="Shaw R."/>
            <person name="Farmerie W.G."/>
            <person name="Folta K.M."/>
            <person name="Soltis D.E."/>
        </authorList>
    </citation>
    <scope>NUCLEOTIDE SEQUENCE [LARGE SCALE GENOMIC DNA]</scope>
</reference>
<reference key="2">
    <citation type="journal article" date="1992" name="Science">
        <title>Carnivorous plants: phylogeny and structural evolution.</title>
        <authorList>
            <person name="Albert V.A."/>
            <person name="Williams S.E."/>
            <person name="Chase M.W."/>
        </authorList>
    </citation>
    <scope>NUCLEOTIDE SEQUENCE [GENOMIC DNA] OF 11-475</scope>
</reference>
<comment type="function">
    <text evidence="1">RuBisCO catalyzes two reactions: the carboxylation of D-ribulose 1,5-bisphosphate, the primary event in carbon dioxide fixation, as well as the oxidative fragmentation of the pentose substrate in the photorespiration process. Both reactions occur simultaneously and in competition at the same active site.</text>
</comment>
<comment type="catalytic activity">
    <reaction evidence="1">
        <text>2 (2R)-3-phosphoglycerate + 2 H(+) = D-ribulose 1,5-bisphosphate + CO2 + H2O</text>
        <dbReference type="Rhea" id="RHEA:23124"/>
        <dbReference type="ChEBI" id="CHEBI:15377"/>
        <dbReference type="ChEBI" id="CHEBI:15378"/>
        <dbReference type="ChEBI" id="CHEBI:16526"/>
        <dbReference type="ChEBI" id="CHEBI:57870"/>
        <dbReference type="ChEBI" id="CHEBI:58272"/>
        <dbReference type="EC" id="4.1.1.39"/>
    </reaction>
</comment>
<comment type="catalytic activity">
    <reaction evidence="1">
        <text>D-ribulose 1,5-bisphosphate + O2 = 2-phosphoglycolate + (2R)-3-phosphoglycerate + 2 H(+)</text>
        <dbReference type="Rhea" id="RHEA:36631"/>
        <dbReference type="ChEBI" id="CHEBI:15378"/>
        <dbReference type="ChEBI" id="CHEBI:15379"/>
        <dbReference type="ChEBI" id="CHEBI:57870"/>
        <dbReference type="ChEBI" id="CHEBI:58033"/>
        <dbReference type="ChEBI" id="CHEBI:58272"/>
    </reaction>
</comment>
<comment type="cofactor">
    <cofactor evidence="1">
        <name>Mg(2+)</name>
        <dbReference type="ChEBI" id="CHEBI:18420"/>
    </cofactor>
    <text evidence="1">Binds 1 Mg(2+) ion per subunit.</text>
</comment>
<comment type="subunit">
    <text evidence="1">Heterohexadecamer of 8 large chains and 8 small chains; disulfide-linked. The disulfide link is formed within the large subunit homodimers.</text>
</comment>
<comment type="subcellular location">
    <subcellularLocation>
        <location>Plastid</location>
        <location>Chloroplast</location>
    </subcellularLocation>
</comment>
<comment type="PTM">
    <text evidence="1">The disulfide bond which can form in the large chain dimeric partners within the hexadecamer appears to be associated with oxidative stress and protein turnover.</text>
</comment>
<comment type="miscellaneous">
    <text evidence="1">The basic functional RuBisCO is composed of a large chain homodimer in a 'head-to-tail' conformation. In form I RuBisCO this homodimer is arranged in a barrel-like tetramer with the small subunits forming a tetrameric 'cap' on each end of the 'barrel'.</text>
</comment>
<comment type="similarity">
    <text evidence="1">Belongs to the RuBisCO large chain family. Type I subfamily.</text>
</comment>
<keyword id="KW-0007">Acetylation</keyword>
<keyword id="KW-0113">Calvin cycle</keyword>
<keyword id="KW-0120">Carbon dioxide fixation</keyword>
<keyword id="KW-0150">Chloroplast</keyword>
<keyword id="KW-1015">Disulfide bond</keyword>
<keyword id="KW-0456">Lyase</keyword>
<keyword id="KW-0460">Magnesium</keyword>
<keyword id="KW-0479">Metal-binding</keyword>
<keyword id="KW-0488">Methylation</keyword>
<keyword id="KW-0503">Monooxygenase</keyword>
<keyword id="KW-0560">Oxidoreductase</keyword>
<keyword id="KW-0601">Photorespiration</keyword>
<keyword id="KW-0602">Photosynthesis</keyword>
<keyword id="KW-0934">Plastid</keyword>
<protein>
    <recommendedName>
        <fullName evidence="1">Ribulose bisphosphate carboxylase large chain</fullName>
        <shortName evidence="1">RuBisCO large subunit</shortName>
        <ecNumber evidence="1">4.1.1.39</ecNumber>
    </recommendedName>
</protein>
<dbReference type="EC" id="4.1.1.39" evidence="1"/>
<dbReference type="EMBL" id="DQ923116">
    <property type="protein sequence ID" value="ABI49786.1"/>
    <property type="molecule type" value="Genomic_DNA"/>
</dbReference>
<dbReference type="EMBL" id="L01943">
    <property type="protein sequence ID" value="AAA84567.2"/>
    <property type="molecule type" value="Genomic_DNA"/>
</dbReference>
<dbReference type="RefSeq" id="YP_740573.1">
    <property type="nucleotide sequence ID" value="NC_008335.1"/>
</dbReference>
<dbReference type="SMR" id="P28441"/>
<dbReference type="GeneID" id="4271298"/>
<dbReference type="GO" id="GO:0009507">
    <property type="term" value="C:chloroplast"/>
    <property type="evidence" value="ECO:0007669"/>
    <property type="project" value="UniProtKB-SubCell"/>
</dbReference>
<dbReference type="GO" id="GO:0000287">
    <property type="term" value="F:magnesium ion binding"/>
    <property type="evidence" value="ECO:0007669"/>
    <property type="project" value="UniProtKB-UniRule"/>
</dbReference>
<dbReference type="GO" id="GO:0004497">
    <property type="term" value="F:monooxygenase activity"/>
    <property type="evidence" value="ECO:0007669"/>
    <property type="project" value="UniProtKB-KW"/>
</dbReference>
<dbReference type="GO" id="GO:0016984">
    <property type="term" value="F:ribulose-bisphosphate carboxylase activity"/>
    <property type="evidence" value="ECO:0007669"/>
    <property type="project" value="UniProtKB-UniRule"/>
</dbReference>
<dbReference type="GO" id="GO:0009853">
    <property type="term" value="P:photorespiration"/>
    <property type="evidence" value="ECO:0007669"/>
    <property type="project" value="UniProtKB-KW"/>
</dbReference>
<dbReference type="GO" id="GO:0019253">
    <property type="term" value="P:reductive pentose-phosphate cycle"/>
    <property type="evidence" value="ECO:0007669"/>
    <property type="project" value="UniProtKB-UniRule"/>
</dbReference>
<dbReference type="CDD" id="cd08212">
    <property type="entry name" value="RuBisCO_large_I"/>
    <property type="match status" value="1"/>
</dbReference>
<dbReference type="FunFam" id="3.20.20.110:FF:000001">
    <property type="entry name" value="Ribulose bisphosphate carboxylase large chain"/>
    <property type="match status" value="1"/>
</dbReference>
<dbReference type="FunFam" id="3.30.70.150:FF:000001">
    <property type="entry name" value="Ribulose bisphosphate carboxylase large chain"/>
    <property type="match status" value="1"/>
</dbReference>
<dbReference type="Gene3D" id="3.20.20.110">
    <property type="entry name" value="Ribulose bisphosphate carboxylase, large subunit, C-terminal domain"/>
    <property type="match status" value="1"/>
</dbReference>
<dbReference type="Gene3D" id="3.30.70.150">
    <property type="entry name" value="RuBisCO large subunit, N-terminal domain"/>
    <property type="match status" value="1"/>
</dbReference>
<dbReference type="HAMAP" id="MF_01338">
    <property type="entry name" value="RuBisCO_L_type1"/>
    <property type="match status" value="1"/>
</dbReference>
<dbReference type="InterPro" id="IPR033966">
    <property type="entry name" value="RuBisCO"/>
</dbReference>
<dbReference type="InterPro" id="IPR020878">
    <property type="entry name" value="RuBisCo_large_chain_AS"/>
</dbReference>
<dbReference type="InterPro" id="IPR000685">
    <property type="entry name" value="RuBisCO_lsu_C"/>
</dbReference>
<dbReference type="InterPro" id="IPR036376">
    <property type="entry name" value="RuBisCO_lsu_C_sf"/>
</dbReference>
<dbReference type="InterPro" id="IPR017443">
    <property type="entry name" value="RuBisCO_lsu_fd_N"/>
</dbReference>
<dbReference type="InterPro" id="IPR036422">
    <property type="entry name" value="RuBisCO_lsu_N_sf"/>
</dbReference>
<dbReference type="InterPro" id="IPR020888">
    <property type="entry name" value="RuBisCO_lsuI"/>
</dbReference>
<dbReference type="NCBIfam" id="NF003252">
    <property type="entry name" value="PRK04208.1"/>
    <property type="match status" value="1"/>
</dbReference>
<dbReference type="PANTHER" id="PTHR42704">
    <property type="entry name" value="RIBULOSE BISPHOSPHATE CARBOXYLASE"/>
    <property type="match status" value="1"/>
</dbReference>
<dbReference type="PANTHER" id="PTHR42704:SF15">
    <property type="entry name" value="RIBULOSE BISPHOSPHATE CARBOXYLASE LARGE CHAIN"/>
    <property type="match status" value="1"/>
</dbReference>
<dbReference type="Pfam" id="PF00016">
    <property type="entry name" value="RuBisCO_large"/>
    <property type="match status" value="1"/>
</dbReference>
<dbReference type="Pfam" id="PF02788">
    <property type="entry name" value="RuBisCO_large_N"/>
    <property type="match status" value="1"/>
</dbReference>
<dbReference type="SFLD" id="SFLDG01052">
    <property type="entry name" value="RuBisCO"/>
    <property type="match status" value="1"/>
</dbReference>
<dbReference type="SFLD" id="SFLDS00014">
    <property type="entry name" value="RuBisCO"/>
    <property type="match status" value="1"/>
</dbReference>
<dbReference type="SFLD" id="SFLDG00301">
    <property type="entry name" value="RuBisCO-like_proteins"/>
    <property type="match status" value="1"/>
</dbReference>
<dbReference type="SUPFAM" id="SSF51649">
    <property type="entry name" value="RuBisCo, C-terminal domain"/>
    <property type="match status" value="1"/>
</dbReference>
<dbReference type="SUPFAM" id="SSF54966">
    <property type="entry name" value="RuBisCO, large subunit, small (N-terminal) domain"/>
    <property type="match status" value="1"/>
</dbReference>
<dbReference type="PROSITE" id="PS00157">
    <property type="entry name" value="RUBISCO_LARGE"/>
    <property type="match status" value="1"/>
</dbReference>
<gene>
    <name evidence="1" type="primary">rbcL</name>
</gene>